<comment type="function">
    <text evidence="1">Catalyzes the phosphorylation of riboflavin (vitamin B2) to form flavin mononucleotide (FMN) coenzyme.</text>
</comment>
<comment type="catalytic activity">
    <reaction>
        <text>riboflavin + ATP = FMN + ADP + H(+)</text>
        <dbReference type="Rhea" id="RHEA:14357"/>
        <dbReference type="ChEBI" id="CHEBI:15378"/>
        <dbReference type="ChEBI" id="CHEBI:30616"/>
        <dbReference type="ChEBI" id="CHEBI:57986"/>
        <dbReference type="ChEBI" id="CHEBI:58210"/>
        <dbReference type="ChEBI" id="CHEBI:456216"/>
        <dbReference type="EC" id="2.7.1.26"/>
    </reaction>
</comment>
<comment type="cofactor">
    <cofactor evidence="1">
        <name>Zn(2+)</name>
        <dbReference type="ChEBI" id="CHEBI:29105"/>
    </cofactor>
    <cofactor evidence="1">
        <name>Mg(2+)</name>
        <dbReference type="ChEBI" id="CHEBI:18420"/>
    </cofactor>
    <text evidence="1">Zinc or magnesium.</text>
</comment>
<comment type="pathway">
    <text>Cofactor biosynthesis; FMN biosynthesis; FMN from riboflavin (ATP route): step 1/1.</text>
</comment>
<comment type="similarity">
    <text evidence="3">Belongs to the flavokinase family.</text>
</comment>
<reference key="1">
    <citation type="journal article" date="2004" name="Nature">
        <title>Genome evolution in yeasts.</title>
        <authorList>
            <person name="Dujon B."/>
            <person name="Sherman D."/>
            <person name="Fischer G."/>
            <person name="Durrens P."/>
            <person name="Casaregola S."/>
            <person name="Lafontaine I."/>
            <person name="de Montigny J."/>
            <person name="Marck C."/>
            <person name="Neuveglise C."/>
            <person name="Talla E."/>
            <person name="Goffard N."/>
            <person name="Frangeul L."/>
            <person name="Aigle M."/>
            <person name="Anthouard V."/>
            <person name="Babour A."/>
            <person name="Barbe V."/>
            <person name="Barnay S."/>
            <person name="Blanchin S."/>
            <person name="Beckerich J.-M."/>
            <person name="Beyne E."/>
            <person name="Bleykasten C."/>
            <person name="Boisrame A."/>
            <person name="Boyer J."/>
            <person name="Cattolico L."/>
            <person name="Confanioleri F."/>
            <person name="de Daruvar A."/>
            <person name="Despons L."/>
            <person name="Fabre E."/>
            <person name="Fairhead C."/>
            <person name="Ferry-Dumazet H."/>
            <person name="Groppi A."/>
            <person name="Hantraye F."/>
            <person name="Hennequin C."/>
            <person name="Jauniaux N."/>
            <person name="Joyet P."/>
            <person name="Kachouri R."/>
            <person name="Kerrest A."/>
            <person name="Koszul R."/>
            <person name="Lemaire M."/>
            <person name="Lesur I."/>
            <person name="Ma L."/>
            <person name="Muller H."/>
            <person name="Nicaud J.-M."/>
            <person name="Nikolski M."/>
            <person name="Oztas S."/>
            <person name="Ozier-Kalogeropoulos O."/>
            <person name="Pellenz S."/>
            <person name="Potier S."/>
            <person name="Richard G.-F."/>
            <person name="Straub M.-L."/>
            <person name="Suleau A."/>
            <person name="Swennen D."/>
            <person name="Tekaia F."/>
            <person name="Wesolowski-Louvel M."/>
            <person name="Westhof E."/>
            <person name="Wirth B."/>
            <person name="Zeniou-Meyer M."/>
            <person name="Zivanovic Y."/>
            <person name="Bolotin-Fukuhara M."/>
            <person name="Thierry A."/>
            <person name="Bouchier C."/>
            <person name="Caudron B."/>
            <person name="Scarpelli C."/>
            <person name="Gaillardin C."/>
            <person name="Weissenbach J."/>
            <person name="Wincker P."/>
            <person name="Souciet J.-L."/>
        </authorList>
    </citation>
    <scope>NUCLEOTIDE SEQUENCE [LARGE SCALE GENOMIC DNA]</scope>
    <source>
        <strain>ATCC 8585 / CBS 2359 / DSM 70799 / NBRC 1267 / NRRL Y-1140 / WM37</strain>
    </source>
</reference>
<evidence type="ECO:0000250" key="1"/>
<evidence type="ECO:0000250" key="2">
    <source>
        <dbReference type="UniProtKB" id="Q969G6"/>
    </source>
</evidence>
<evidence type="ECO:0000305" key="3"/>
<dbReference type="EC" id="2.7.1.26"/>
<dbReference type="EMBL" id="CR382123">
    <property type="protein sequence ID" value="CAH01733.1"/>
    <property type="molecule type" value="Genomic_DNA"/>
</dbReference>
<dbReference type="RefSeq" id="XP_452882.1">
    <property type="nucleotide sequence ID" value="XM_452882.1"/>
</dbReference>
<dbReference type="SMR" id="Q6CT57"/>
<dbReference type="FunCoup" id="Q6CT57">
    <property type="interactions" value="392"/>
</dbReference>
<dbReference type="STRING" id="284590.Q6CT57"/>
<dbReference type="PaxDb" id="284590-Q6CT57"/>
<dbReference type="KEGG" id="kla:KLLA0_C15213g"/>
<dbReference type="eggNOG" id="KOG3110">
    <property type="taxonomic scope" value="Eukaryota"/>
</dbReference>
<dbReference type="HOGENOM" id="CLU_048437_3_2_1"/>
<dbReference type="InParanoid" id="Q6CT57"/>
<dbReference type="OMA" id="NGEVHKM"/>
<dbReference type="UniPathway" id="UPA00276">
    <property type="reaction ID" value="UER00406"/>
</dbReference>
<dbReference type="Proteomes" id="UP000000598">
    <property type="component" value="Chromosome C"/>
</dbReference>
<dbReference type="GO" id="GO:0005739">
    <property type="term" value="C:mitochondrion"/>
    <property type="evidence" value="ECO:0007669"/>
    <property type="project" value="TreeGrafter"/>
</dbReference>
<dbReference type="GO" id="GO:0005524">
    <property type="term" value="F:ATP binding"/>
    <property type="evidence" value="ECO:0007669"/>
    <property type="project" value="UniProtKB-KW"/>
</dbReference>
<dbReference type="GO" id="GO:0046872">
    <property type="term" value="F:metal ion binding"/>
    <property type="evidence" value="ECO:0007669"/>
    <property type="project" value="UniProtKB-KW"/>
</dbReference>
<dbReference type="GO" id="GO:0008531">
    <property type="term" value="F:riboflavin kinase activity"/>
    <property type="evidence" value="ECO:0007669"/>
    <property type="project" value="UniProtKB-EC"/>
</dbReference>
<dbReference type="GO" id="GO:0009398">
    <property type="term" value="P:FMN biosynthetic process"/>
    <property type="evidence" value="ECO:0007669"/>
    <property type="project" value="UniProtKB-UniPathway"/>
</dbReference>
<dbReference type="GO" id="GO:0009231">
    <property type="term" value="P:riboflavin biosynthetic process"/>
    <property type="evidence" value="ECO:0007669"/>
    <property type="project" value="InterPro"/>
</dbReference>
<dbReference type="Gene3D" id="2.40.30.30">
    <property type="entry name" value="Riboflavin kinase-like"/>
    <property type="match status" value="1"/>
</dbReference>
<dbReference type="InterPro" id="IPR023468">
    <property type="entry name" value="Riboflavin_kinase"/>
</dbReference>
<dbReference type="InterPro" id="IPR015865">
    <property type="entry name" value="Riboflavin_kinase_bac/euk"/>
</dbReference>
<dbReference type="InterPro" id="IPR023465">
    <property type="entry name" value="Riboflavin_kinase_dom_sf"/>
</dbReference>
<dbReference type="PANTHER" id="PTHR22749:SF6">
    <property type="entry name" value="RIBOFLAVIN KINASE"/>
    <property type="match status" value="1"/>
</dbReference>
<dbReference type="PANTHER" id="PTHR22749">
    <property type="entry name" value="RIBOFLAVIN KINASE/FMN ADENYLYLTRANSFERASE"/>
    <property type="match status" value="1"/>
</dbReference>
<dbReference type="Pfam" id="PF01687">
    <property type="entry name" value="Flavokinase"/>
    <property type="match status" value="1"/>
</dbReference>
<dbReference type="SMART" id="SM00904">
    <property type="entry name" value="Flavokinase"/>
    <property type="match status" value="1"/>
</dbReference>
<dbReference type="SUPFAM" id="SSF82114">
    <property type="entry name" value="Riboflavin kinase-like"/>
    <property type="match status" value="1"/>
</dbReference>
<sequence length="185" mass="20939">MTRHCDVSIPDSPEPPFPITTSFVDVIAGFGRGSAELGIPTANVPIDDLPKIVEQLDTGVYFGWCKVRMAKDRDTKVEQRPDGREVQYNNGTLLNDEDLAVLPVVLSVGWNPFYQNKNKTVELHIIHKFSDNFYGAQIKFNFLGYIRPELDYTTKDALIADIHTDIEIAKEKLQLPGYRKLKDTL</sequence>
<protein>
    <recommendedName>
        <fullName>Riboflavin kinase</fullName>
        <ecNumber>2.7.1.26</ecNumber>
    </recommendedName>
    <alternativeName>
        <fullName>Flavin mononucleotide kinase 1</fullName>
    </alternativeName>
</protein>
<keyword id="KW-0067">ATP-binding</keyword>
<keyword id="KW-0285">Flavoprotein</keyword>
<keyword id="KW-0288">FMN</keyword>
<keyword id="KW-0418">Kinase</keyword>
<keyword id="KW-0460">Magnesium</keyword>
<keyword id="KW-0479">Metal-binding</keyword>
<keyword id="KW-0547">Nucleotide-binding</keyword>
<keyword id="KW-1185">Reference proteome</keyword>
<keyword id="KW-0808">Transferase</keyword>
<keyword id="KW-0862">Zinc</keyword>
<name>RIFK_KLULA</name>
<feature type="chain" id="PRO_0000301842" description="Riboflavin kinase">
    <location>
        <begin position="1"/>
        <end position="185"/>
    </location>
</feature>
<feature type="active site" description="Nucleophile" evidence="1">
    <location>
        <position position="122"/>
    </location>
</feature>
<feature type="binding site" evidence="2">
    <location>
        <position position="41"/>
    </location>
    <ligand>
        <name>Mg(2+)</name>
        <dbReference type="ChEBI" id="CHEBI:18420"/>
    </ligand>
</feature>
<feature type="binding site" evidence="2">
    <location>
        <position position="43"/>
    </location>
    <ligand>
        <name>Mg(2+)</name>
        <dbReference type="ChEBI" id="CHEBI:18420"/>
    </ligand>
</feature>
<gene>
    <name type="primary">FMN1</name>
    <name type="ordered locus">KLLA0C15213g</name>
</gene>
<proteinExistence type="inferred from homology"/>
<accession>Q6CT57</accession>
<organism>
    <name type="scientific">Kluyveromyces lactis (strain ATCC 8585 / CBS 2359 / DSM 70799 / NBRC 1267 / NRRL Y-1140 / WM37)</name>
    <name type="common">Yeast</name>
    <name type="synonym">Candida sphaerica</name>
    <dbReference type="NCBI Taxonomy" id="284590"/>
    <lineage>
        <taxon>Eukaryota</taxon>
        <taxon>Fungi</taxon>
        <taxon>Dikarya</taxon>
        <taxon>Ascomycota</taxon>
        <taxon>Saccharomycotina</taxon>
        <taxon>Saccharomycetes</taxon>
        <taxon>Saccharomycetales</taxon>
        <taxon>Saccharomycetaceae</taxon>
        <taxon>Kluyveromyces</taxon>
    </lineage>
</organism>